<dbReference type="EC" id="3.6.5.-" evidence="1"/>
<dbReference type="EMBL" id="CP000100">
    <property type="protein sequence ID" value="ABB56989.1"/>
    <property type="molecule type" value="Genomic_DNA"/>
</dbReference>
<dbReference type="SMR" id="Q31PN0"/>
<dbReference type="STRING" id="1140.Synpcc7942_0959"/>
<dbReference type="PaxDb" id="1140-Synpcc7942_0959"/>
<dbReference type="KEGG" id="syf:Synpcc7942_0959"/>
<dbReference type="eggNOG" id="COG0536">
    <property type="taxonomic scope" value="Bacteria"/>
</dbReference>
<dbReference type="HOGENOM" id="CLU_011747_2_0_3"/>
<dbReference type="OrthoDB" id="9807318at2"/>
<dbReference type="BioCyc" id="SYNEL:SYNPCC7942_0959-MONOMER"/>
<dbReference type="Proteomes" id="UP000889800">
    <property type="component" value="Chromosome"/>
</dbReference>
<dbReference type="GO" id="GO:0005737">
    <property type="term" value="C:cytoplasm"/>
    <property type="evidence" value="ECO:0007669"/>
    <property type="project" value="UniProtKB-SubCell"/>
</dbReference>
<dbReference type="GO" id="GO:0005525">
    <property type="term" value="F:GTP binding"/>
    <property type="evidence" value="ECO:0007669"/>
    <property type="project" value="UniProtKB-UniRule"/>
</dbReference>
<dbReference type="GO" id="GO:0003924">
    <property type="term" value="F:GTPase activity"/>
    <property type="evidence" value="ECO:0007669"/>
    <property type="project" value="UniProtKB-UniRule"/>
</dbReference>
<dbReference type="GO" id="GO:0000287">
    <property type="term" value="F:magnesium ion binding"/>
    <property type="evidence" value="ECO:0007669"/>
    <property type="project" value="InterPro"/>
</dbReference>
<dbReference type="GO" id="GO:0042254">
    <property type="term" value="P:ribosome biogenesis"/>
    <property type="evidence" value="ECO:0007669"/>
    <property type="project" value="UniProtKB-UniRule"/>
</dbReference>
<dbReference type="CDD" id="cd01898">
    <property type="entry name" value="Obg"/>
    <property type="match status" value="1"/>
</dbReference>
<dbReference type="FunFam" id="2.70.210.12:FF:000001">
    <property type="entry name" value="GTPase Obg"/>
    <property type="match status" value="1"/>
</dbReference>
<dbReference type="Gene3D" id="2.70.210.12">
    <property type="entry name" value="GTP1/OBG domain"/>
    <property type="match status" value="1"/>
</dbReference>
<dbReference type="Gene3D" id="3.40.50.300">
    <property type="entry name" value="P-loop containing nucleotide triphosphate hydrolases"/>
    <property type="match status" value="1"/>
</dbReference>
<dbReference type="HAMAP" id="MF_01454">
    <property type="entry name" value="GTPase_Obg"/>
    <property type="match status" value="1"/>
</dbReference>
<dbReference type="InterPro" id="IPR031167">
    <property type="entry name" value="G_OBG"/>
</dbReference>
<dbReference type="InterPro" id="IPR006073">
    <property type="entry name" value="GTP-bd"/>
</dbReference>
<dbReference type="InterPro" id="IPR014100">
    <property type="entry name" value="GTP-bd_Obg/CgtA"/>
</dbReference>
<dbReference type="InterPro" id="IPR006074">
    <property type="entry name" value="GTP1-OBG_CS"/>
</dbReference>
<dbReference type="InterPro" id="IPR006169">
    <property type="entry name" value="GTP1_OBG_dom"/>
</dbReference>
<dbReference type="InterPro" id="IPR036726">
    <property type="entry name" value="GTP1_OBG_dom_sf"/>
</dbReference>
<dbReference type="InterPro" id="IPR045086">
    <property type="entry name" value="OBG_GTPase"/>
</dbReference>
<dbReference type="InterPro" id="IPR027417">
    <property type="entry name" value="P-loop_NTPase"/>
</dbReference>
<dbReference type="NCBIfam" id="TIGR02729">
    <property type="entry name" value="Obg_CgtA"/>
    <property type="match status" value="1"/>
</dbReference>
<dbReference type="NCBIfam" id="NF008955">
    <property type="entry name" value="PRK12297.1"/>
    <property type="match status" value="1"/>
</dbReference>
<dbReference type="NCBIfam" id="NF008956">
    <property type="entry name" value="PRK12299.1"/>
    <property type="match status" value="1"/>
</dbReference>
<dbReference type="PANTHER" id="PTHR11702">
    <property type="entry name" value="DEVELOPMENTALLY REGULATED GTP-BINDING PROTEIN-RELATED"/>
    <property type="match status" value="1"/>
</dbReference>
<dbReference type="PANTHER" id="PTHR11702:SF31">
    <property type="entry name" value="MITOCHONDRIAL RIBOSOME-ASSOCIATED GTPASE 2"/>
    <property type="match status" value="1"/>
</dbReference>
<dbReference type="Pfam" id="PF01018">
    <property type="entry name" value="GTP1_OBG"/>
    <property type="match status" value="1"/>
</dbReference>
<dbReference type="Pfam" id="PF01926">
    <property type="entry name" value="MMR_HSR1"/>
    <property type="match status" value="1"/>
</dbReference>
<dbReference type="PIRSF" id="PIRSF002401">
    <property type="entry name" value="GTP_bd_Obg/CgtA"/>
    <property type="match status" value="1"/>
</dbReference>
<dbReference type="PRINTS" id="PR00326">
    <property type="entry name" value="GTP1OBG"/>
</dbReference>
<dbReference type="SUPFAM" id="SSF82051">
    <property type="entry name" value="Obg GTP-binding protein N-terminal domain"/>
    <property type="match status" value="1"/>
</dbReference>
<dbReference type="SUPFAM" id="SSF52540">
    <property type="entry name" value="P-loop containing nucleoside triphosphate hydrolases"/>
    <property type="match status" value="1"/>
</dbReference>
<dbReference type="PROSITE" id="PS51710">
    <property type="entry name" value="G_OBG"/>
    <property type="match status" value="1"/>
</dbReference>
<dbReference type="PROSITE" id="PS00905">
    <property type="entry name" value="GTP1_OBG"/>
    <property type="match status" value="1"/>
</dbReference>
<dbReference type="PROSITE" id="PS51883">
    <property type="entry name" value="OBG"/>
    <property type="match status" value="1"/>
</dbReference>
<accession>Q31PN0</accession>
<comment type="function">
    <text evidence="1">An essential GTPase which binds GTP, GDP and possibly (p)ppGpp with moderate affinity, with high nucleotide exchange rates and a fairly low GTP hydrolysis rate. Plays a role in control of the cell cycle, stress response, ribosome biogenesis and in those bacteria that undergo differentiation, in morphogenesis control.</text>
</comment>
<comment type="cofactor">
    <cofactor evidence="1">
        <name>Mg(2+)</name>
        <dbReference type="ChEBI" id="CHEBI:18420"/>
    </cofactor>
</comment>
<comment type="subunit">
    <text evidence="1">Monomer.</text>
</comment>
<comment type="subcellular location">
    <subcellularLocation>
        <location evidence="1">Cytoplasm</location>
    </subcellularLocation>
</comment>
<comment type="similarity">
    <text evidence="1">Belongs to the TRAFAC class OBG-HflX-like GTPase superfamily. OBG GTPase family.</text>
</comment>
<sequence length="343" mass="36741">MQFIDHATICVKAGDGGDGIVAFRREKYVPAGGPSGGNGGRGGSVILVATEQLQTLLDFRYLRLFKAQDGERGGPKGMTGASADDLIIQVPCGTAVYDAETDECLGDLTSAGQTLQVAQGGKGGLGNQHFLSNSNRAPEHALPGLPGEERQLRLELKLLAEVGLIGLPNAGKSMLISVLSAAKPKIADYPFTTLVPNLGVVRRETGDGTVFADIPGLIEGAHRGAGLGHDFLRHIERTRLLIHLVDLTAEDPIADWRTIQAELKAYGRGLSDRPQILALNKIDAVLDEDLSFWQAEFQALTPVPLLCISSADRRGLDALLRLVWQWLDELDAAAELSETRVLN</sequence>
<name>OBG_SYNE7</name>
<evidence type="ECO:0000255" key="1">
    <source>
        <dbReference type="HAMAP-Rule" id="MF_01454"/>
    </source>
</evidence>
<evidence type="ECO:0000255" key="2">
    <source>
        <dbReference type="PROSITE-ProRule" id="PRU01231"/>
    </source>
</evidence>
<protein>
    <recommendedName>
        <fullName evidence="1">GTPase Obg</fullName>
        <ecNumber evidence="1">3.6.5.-</ecNumber>
    </recommendedName>
    <alternativeName>
        <fullName evidence="1">GTP-binding protein Obg</fullName>
    </alternativeName>
</protein>
<gene>
    <name evidence="1" type="primary">obg</name>
    <name type="ordered locus">Synpcc7942_0959</name>
</gene>
<keyword id="KW-0963">Cytoplasm</keyword>
<keyword id="KW-0342">GTP-binding</keyword>
<keyword id="KW-0378">Hydrolase</keyword>
<keyword id="KW-0460">Magnesium</keyword>
<keyword id="KW-0479">Metal-binding</keyword>
<keyword id="KW-0547">Nucleotide-binding</keyword>
<keyword id="KW-1185">Reference proteome</keyword>
<reference key="1">
    <citation type="submission" date="2005-08" db="EMBL/GenBank/DDBJ databases">
        <title>Complete sequence of chromosome 1 of Synechococcus elongatus PCC 7942.</title>
        <authorList>
            <consortium name="US DOE Joint Genome Institute"/>
            <person name="Copeland A."/>
            <person name="Lucas S."/>
            <person name="Lapidus A."/>
            <person name="Barry K."/>
            <person name="Detter J.C."/>
            <person name="Glavina T."/>
            <person name="Hammon N."/>
            <person name="Israni S."/>
            <person name="Pitluck S."/>
            <person name="Schmutz J."/>
            <person name="Larimer F."/>
            <person name="Land M."/>
            <person name="Kyrpides N."/>
            <person name="Lykidis A."/>
            <person name="Golden S."/>
            <person name="Richardson P."/>
        </authorList>
    </citation>
    <scope>NUCLEOTIDE SEQUENCE [LARGE SCALE GENOMIC DNA]</scope>
    <source>
        <strain>ATCC 33912 / PCC 7942 / FACHB-805</strain>
    </source>
</reference>
<feature type="chain" id="PRO_0000386331" description="GTPase Obg">
    <location>
        <begin position="1"/>
        <end position="343"/>
    </location>
</feature>
<feature type="domain" description="Obg" evidence="2">
    <location>
        <begin position="1"/>
        <end position="159"/>
    </location>
</feature>
<feature type="domain" description="OBG-type G" evidence="1">
    <location>
        <begin position="160"/>
        <end position="328"/>
    </location>
</feature>
<feature type="binding site" evidence="1">
    <location>
        <begin position="166"/>
        <end position="173"/>
    </location>
    <ligand>
        <name>GTP</name>
        <dbReference type="ChEBI" id="CHEBI:37565"/>
    </ligand>
</feature>
<feature type="binding site" evidence="1">
    <location>
        <position position="173"/>
    </location>
    <ligand>
        <name>Mg(2+)</name>
        <dbReference type="ChEBI" id="CHEBI:18420"/>
    </ligand>
</feature>
<feature type="binding site" evidence="1">
    <location>
        <begin position="191"/>
        <end position="195"/>
    </location>
    <ligand>
        <name>GTP</name>
        <dbReference type="ChEBI" id="CHEBI:37565"/>
    </ligand>
</feature>
<feature type="binding site" evidence="1">
    <location>
        <position position="193"/>
    </location>
    <ligand>
        <name>Mg(2+)</name>
        <dbReference type="ChEBI" id="CHEBI:18420"/>
    </ligand>
</feature>
<feature type="binding site" evidence="1">
    <location>
        <begin position="213"/>
        <end position="216"/>
    </location>
    <ligand>
        <name>GTP</name>
        <dbReference type="ChEBI" id="CHEBI:37565"/>
    </ligand>
</feature>
<feature type="binding site" evidence="1">
    <location>
        <begin position="280"/>
        <end position="283"/>
    </location>
    <ligand>
        <name>GTP</name>
        <dbReference type="ChEBI" id="CHEBI:37565"/>
    </ligand>
</feature>
<feature type="binding site" evidence="1">
    <location>
        <begin position="309"/>
        <end position="311"/>
    </location>
    <ligand>
        <name>GTP</name>
        <dbReference type="ChEBI" id="CHEBI:37565"/>
    </ligand>
</feature>
<organism>
    <name type="scientific">Synechococcus elongatus (strain ATCC 33912 / PCC 7942 / FACHB-805)</name>
    <name type="common">Anacystis nidulans R2</name>
    <dbReference type="NCBI Taxonomy" id="1140"/>
    <lineage>
        <taxon>Bacteria</taxon>
        <taxon>Bacillati</taxon>
        <taxon>Cyanobacteriota</taxon>
        <taxon>Cyanophyceae</taxon>
        <taxon>Synechococcales</taxon>
        <taxon>Synechococcaceae</taxon>
        <taxon>Synechococcus</taxon>
    </lineage>
</organism>
<proteinExistence type="inferred from homology"/>